<feature type="chain" id="PRO_1000214373" description="Small ribosomal subunit protein uS11">
    <location>
        <begin position="1"/>
        <end position="127"/>
    </location>
</feature>
<dbReference type="EMBL" id="CP001227">
    <property type="protein sequence ID" value="ACR47753.1"/>
    <property type="molecule type" value="Genomic_DNA"/>
</dbReference>
<dbReference type="RefSeq" id="WP_008580920.1">
    <property type="nucleotide sequence ID" value="NC_012730.1"/>
</dbReference>
<dbReference type="SMR" id="C4K2F6"/>
<dbReference type="GeneID" id="34513962"/>
<dbReference type="KEGG" id="rpk:RPR_06115"/>
<dbReference type="HOGENOM" id="CLU_072439_5_0_5"/>
<dbReference type="Proteomes" id="UP000005015">
    <property type="component" value="Chromosome"/>
</dbReference>
<dbReference type="GO" id="GO:1990904">
    <property type="term" value="C:ribonucleoprotein complex"/>
    <property type="evidence" value="ECO:0007669"/>
    <property type="project" value="UniProtKB-KW"/>
</dbReference>
<dbReference type="GO" id="GO:0005840">
    <property type="term" value="C:ribosome"/>
    <property type="evidence" value="ECO:0007669"/>
    <property type="project" value="UniProtKB-KW"/>
</dbReference>
<dbReference type="GO" id="GO:0019843">
    <property type="term" value="F:rRNA binding"/>
    <property type="evidence" value="ECO:0007669"/>
    <property type="project" value="UniProtKB-UniRule"/>
</dbReference>
<dbReference type="GO" id="GO:0003735">
    <property type="term" value="F:structural constituent of ribosome"/>
    <property type="evidence" value="ECO:0007669"/>
    <property type="project" value="InterPro"/>
</dbReference>
<dbReference type="GO" id="GO:0006412">
    <property type="term" value="P:translation"/>
    <property type="evidence" value="ECO:0007669"/>
    <property type="project" value="UniProtKB-UniRule"/>
</dbReference>
<dbReference type="Gene3D" id="3.30.420.80">
    <property type="entry name" value="Ribosomal protein S11"/>
    <property type="match status" value="1"/>
</dbReference>
<dbReference type="HAMAP" id="MF_01310">
    <property type="entry name" value="Ribosomal_uS11"/>
    <property type="match status" value="1"/>
</dbReference>
<dbReference type="InterPro" id="IPR001971">
    <property type="entry name" value="Ribosomal_uS11"/>
</dbReference>
<dbReference type="InterPro" id="IPR019981">
    <property type="entry name" value="Ribosomal_uS11_bac-type"/>
</dbReference>
<dbReference type="InterPro" id="IPR018102">
    <property type="entry name" value="Ribosomal_uS11_CS"/>
</dbReference>
<dbReference type="InterPro" id="IPR036967">
    <property type="entry name" value="Ribosomal_uS11_sf"/>
</dbReference>
<dbReference type="NCBIfam" id="NF003698">
    <property type="entry name" value="PRK05309.1"/>
    <property type="match status" value="1"/>
</dbReference>
<dbReference type="NCBIfam" id="TIGR03632">
    <property type="entry name" value="uS11_bact"/>
    <property type="match status" value="1"/>
</dbReference>
<dbReference type="PANTHER" id="PTHR11759">
    <property type="entry name" value="40S RIBOSOMAL PROTEIN S14/30S RIBOSOMAL PROTEIN S11"/>
    <property type="match status" value="1"/>
</dbReference>
<dbReference type="Pfam" id="PF00411">
    <property type="entry name" value="Ribosomal_S11"/>
    <property type="match status" value="1"/>
</dbReference>
<dbReference type="PIRSF" id="PIRSF002131">
    <property type="entry name" value="Ribosomal_S11"/>
    <property type="match status" value="1"/>
</dbReference>
<dbReference type="SUPFAM" id="SSF53137">
    <property type="entry name" value="Translational machinery components"/>
    <property type="match status" value="1"/>
</dbReference>
<dbReference type="PROSITE" id="PS00054">
    <property type="entry name" value="RIBOSOMAL_S11"/>
    <property type="match status" value="1"/>
</dbReference>
<reference key="1">
    <citation type="journal article" date="2009" name="PLoS ONE">
        <title>Genome sequence of the endosymbiont Rickettsia peacockii and comparison with virulent Rickettsia rickettsii: identification of virulence factors.</title>
        <authorList>
            <person name="Felsheim R.F."/>
            <person name="Kurtti T.J."/>
            <person name="Munderloh U.G."/>
        </authorList>
    </citation>
    <scope>NUCLEOTIDE SEQUENCE [LARGE SCALE GENOMIC DNA]</scope>
    <source>
        <strain>Rustic</strain>
    </source>
</reference>
<organism>
    <name type="scientific">Rickettsia peacockii (strain Rustic)</name>
    <dbReference type="NCBI Taxonomy" id="562019"/>
    <lineage>
        <taxon>Bacteria</taxon>
        <taxon>Pseudomonadati</taxon>
        <taxon>Pseudomonadota</taxon>
        <taxon>Alphaproteobacteria</taxon>
        <taxon>Rickettsiales</taxon>
        <taxon>Rickettsiaceae</taxon>
        <taxon>Rickettsieae</taxon>
        <taxon>Rickettsia</taxon>
        <taxon>spotted fever group</taxon>
    </lineage>
</organism>
<proteinExistence type="inferred from homology"/>
<comment type="function">
    <text evidence="1">Located on the platform of the 30S subunit, it bridges several disparate RNA helices of the 16S rRNA. Forms part of the Shine-Dalgarno cleft in the 70S ribosome.</text>
</comment>
<comment type="subunit">
    <text evidence="1">Part of the 30S ribosomal subunit. Interacts with proteins S7 and S18. Binds to IF-3.</text>
</comment>
<comment type="similarity">
    <text evidence="1">Belongs to the universal ribosomal protein uS11 family.</text>
</comment>
<gene>
    <name evidence="1" type="primary">rpsK</name>
    <name type="ordered locus">RPR_06115</name>
</gene>
<accession>C4K2F6</accession>
<keyword id="KW-0687">Ribonucleoprotein</keyword>
<keyword id="KW-0689">Ribosomal protein</keyword>
<keyword id="KW-0694">RNA-binding</keyword>
<keyword id="KW-0699">rRNA-binding</keyword>
<name>RS11_RICPU</name>
<evidence type="ECO:0000255" key="1">
    <source>
        <dbReference type="HAMAP-Rule" id="MF_01310"/>
    </source>
</evidence>
<evidence type="ECO:0000305" key="2"/>
<sequence length="127" mass="13657">MNQTVKVKKKKKTITLGVVHIRASFNNTIVTFTDIQGNTISSASAGGNGFKGARKATPYAAQVTIDRASEKAKEYGLKTISIRIGGPGAQRESAMRALFGQNFVVTSILDVSSIAHNGVRPPKRRRV</sequence>
<protein>
    <recommendedName>
        <fullName evidence="1">Small ribosomal subunit protein uS11</fullName>
    </recommendedName>
    <alternativeName>
        <fullName evidence="2">30S ribosomal protein S11</fullName>
    </alternativeName>
</protein>